<gene>
    <name evidence="1" type="primary">cmk</name>
    <name type="ordered locus">BOV_0025</name>
</gene>
<sequence>MKSFVVAPFIVAIDGPAASGKGTLARRIATHYGMPHLDTGLTYRAVAKALLDKGLPLDDEALATDAALSLDLLAMDKAVLSAHAIGEAASKVAVMPAVRRALVEAQRHFANALPSSVLDGRDIGTVVCPDAAIKLFVTASPEVRARRRFDEVLARGDTADFAEILADLKKRDERDMNRTDSPLRPAEDAHLLDTSEMSIEAAFLAAKKLIDHALAQHRG</sequence>
<protein>
    <recommendedName>
        <fullName evidence="1">Cytidylate kinase</fullName>
        <shortName evidence="1">CK</shortName>
        <ecNumber evidence="1">2.7.4.25</ecNumber>
    </recommendedName>
    <alternativeName>
        <fullName evidence="1">Cytidine monophosphate kinase</fullName>
        <shortName evidence="1">CMP kinase</shortName>
    </alternativeName>
</protein>
<keyword id="KW-0067">ATP-binding</keyword>
<keyword id="KW-0963">Cytoplasm</keyword>
<keyword id="KW-0418">Kinase</keyword>
<keyword id="KW-0547">Nucleotide-binding</keyword>
<keyword id="KW-0808">Transferase</keyword>
<dbReference type="EC" id="2.7.4.25" evidence="1"/>
<dbReference type="EMBL" id="CP000708">
    <property type="protein sequence ID" value="ABQ61160.1"/>
    <property type="molecule type" value="Genomic_DNA"/>
</dbReference>
<dbReference type="RefSeq" id="WP_004685325.1">
    <property type="nucleotide sequence ID" value="NC_009505.1"/>
</dbReference>
<dbReference type="SMR" id="A5VMX5"/>
<dbReference type="GeneID" id="97534537"/>
<dbReference type="KEGG" id="bov:BOV_0025"/>
<dbReference type="HOGENOM" id="CLU_079959_0_1_5"/>
<dbReference type="PhylomeDB" id="A5VMX5"/>
<dbReference type="Proteomes" id="UP000006383">
    <property type="component" value="Chromosome I"/>
</dbReference>
<dbReference type="GO" id="GO:0005737">
    <property type="term" value="C:cytoplasm"/>
    <property type="evidence" value="ECO:0007669"/>
    <property type="project" value="UniProtKB-SubCell"/>
</dbReference>
<dbReference type="GO" id="GO:0005524">
    <property type="term" value="F:ATP binding"/>
    <property type="evidence" value="ECO:0007669"/>
    <property type="project" value="UniProtKB-UniRule"/>
</dbReference>
<dbReference type="GO" id="GO:0036430">
    <property type="term" value="F:CMP kinase activity"/>
    <property type="evidence" value="ECO:0007669"/>
    <property type="project" value="RHEA"/>
</dbReference>
<dbReference type="GO" id="GO:0036431">
    <property type="term" value="F:dCMP kinase activity"/>
    <property type="evidence" value="ECO:0007669"/>
    <property type="project" value="RHEA"/>
</dbReference>
<dbReference type="GO" id="GO:0006220">
    <property type="term" value="P:pyrimidine nucleotide metabolic process"/>
    <property type="evidence" value="ECO:0007669"/>
    <property type="project" value="UniProtKB-UniRule"/>
</dbReference>
<dbReference type="CDD" id="cd02020">
    <property type="entry name" value="CMPK"/>
    <property type="match status" value="1"/>
</dbReference>
<dbReference type="Gene3D" id="3.40.50.300">
    <property type="entry name" value="P-loop containing nucleotide triphosphate hydrolases"/>
    <property type="match status" value="1"/>
</dbReference>
<dbReference type="HAMAP" id="MF_00238">
    <property type="entry name" value="Cytidyl_kinase_type1"/>
    <property type="match status" value="1"/>
</dbReference>
<dbReference type="InterPro" id="IPR003136">
    <property type="entry name" value="Cytidylate_kin"/>
</dbReference>
<dbReference type="InterPro" id="IPR011994">
    <property type="entry name" value="Cytidylate_kinase_dom"/>
</dbReference>
<dbReference type="InterPro" id="IPR027417">
    <property type="entry name" value="P-loop_NTPase"/>
</dbReference>
<dbReference type="NCBIfam" id="TIGR00017">
    <property type="entry name" value="cmk"/>
    <property type="match status" value="1"/>
</dbReference>
<dbReference type="Pfam" id="PF02224">
    <property type="entry name" value="Cytidylate_kin"/>
    <property type="match status" value="1"/>
</dbReference>
<dbReference type="SUPFAM" id="SSF52540">
    <property type="entry name" value="P-loop containing nucleoside triphosphate hydrolases"/>
    <property type="match status" value="1"/>
</dbReference>
<accession>A5VMX5</accession>
<name>KCY_BRUO2</name>
<evidence type="ECO:0000255" key="1">
    <source>
        <dbReference type="HAMAP-Rule" id="MF_00238"/>
    </source>
</evidence>
<comment type="catalytic activity">
    <reaction evidence="1">
        <text>CMP + ATP = CDP + ADP</text>
        <dbReference type="Rhea" id="RHEA:11600"/>
        <dbReference type="ChEBI" id="CHEBI:30616"/>
        <dbReference type="ChEBI" id="CHEBI:58069"/>
        <dbReference type="ChEBI" id="CHEBI:60377"/>
        <dbReference type="ChEBI" id="CHEBI:456216"/>
        <dbReference type="EC" id="2.7.4.25"/>
    </reaction>
</comment>
<comment type="catalytic activity">
    <reaction evidence="1">
        <text>dCMP + ATP = dCDP + ADP</text>
        <dbReference type="Rhea" id="RHEA:25094"/>
        <dbReference type="ChEBI" id="CHEBI:30616"/>
        <dbReference type="ChEBI" id="CHEBI:57566"/>
        <dbReference type="ChEBI" id="CHEBI:58593"/>
        <dbReference type="ChEBI" id="CHEBI:456216"/>
        <dbReference type="EC" id="2.7.4.25"/>
    </reaction>
</comment>
<comment type="subcellular location">
    <subcellularLocation>
        <location evidence="1">Cytoplasm</location>
    </subcellularLocation>
</comment>
<comment type="similarity">
    <text evidence="1">Belongs to the cytidylate kinase family. Type 1 subfamily.</text>
</comment>
<organism>
    <name type="scientific">Brucella ovis (strain ATCC 25840 / 63/290 / NCTC 10512)</name>
    <dbReference type="NCBI Taxonomy" id="444178"/>
    <lineage>
        <taxon>Bacteria</taxon>
        <taxon>Pseudomonadati</taxon>
        <taxon>Pseudomonadota</taxon>
        <taxon>Alphaproteobacteria</taxon>
        <taxon>Hyphomicrobiales</taxon>
        <taxon>Brucellaceae</taxon>
        <taxon>Brucella/Ochrobactrum group</taxon>
        <taxon>Brucella</taxon>
    </lineage>
</organism>
<feature type="chain" id="PRO_1000048192" description="Cytidylate kinase">
    <location>
        <begin position="1"/>
        <end position="219"/>
    </location>
</feature>
<feature type="binding site" evidence="1">
    <location>
        <begin position="15"/>
        <end position="23"/>
    </location>
    <ligand>
        <name>ATP</name>
        <dbReference type="ChEBI" id="CHEBI:30616"/>
    </ligand>
</feature>
<proteinExistence type="inferred from homology"/>
<reference key="1">
    <citation type="journal article" date="2009" name="PLoS ONE">
        <title>Genome degradation in Brucella ovis corresponds with narrowing of its host range and tissue tropism.</title>
        <authorList>
            <person name="Tsolis R.M."/>
            <person name="Seshadri R."/>
            <person name="Santos R.L."/>
            <person name="Sangari F.J."/>
            <person name="Lobo J.M."/>
            <person name="de Jong M.F."/>
            <person name="Ren Q."/>
            <person name="Myers G."/>
            <person name="Brinkac L.M."/>
            <person name="Nelson W.C."/>
            <person name="Deboy R.T."/>
            <person name="Angiuoli S."/>
            <person name="Khouri H."/>
            <person name="Dimitrov G."/>
            <person name="Robinson J.R."/>
            <person name="Mulligan S."/>
            <person name="Walker R.L."/>
            <person name="Elzer P.E."/>
            <person name="Hassan K.A."/>
            <person name="Paulsen I.T."/>
        </authorList>
    </citation>
    <scope>NUCLEOTIDE SEQUENCE [LARGE SCALE GENOMIC DNA]</scope>
    <source>
        <strain>ATCC 25840 / 63/290 / NCTC 10512</strain>
    </source>
</reference>